<keyword id="KW-0968">Cytoplasmic vesicle</keyword>
<keyword id="KW-0256">Endoplasmic reticulum</keyword>
<keyword id="KW-0333">Golgi apparatus</keyword>
<keyword id="KW-0472">Membrane</keyword>
<keyword id="KW-1185">Reference proteome</keyword>
<keyword id="KW-0762">Sugar transport</keyword>
<keyword id="KW-0812">Transmembrane</keyword>
<keyword id="KW-1133">Transmembrane helix</keyword>
<keyword id="KW-0813">Transport</keyword>
<protein>
    <recommendedName>
        <fullName>GDP-mannose transporter 2</fullName>
        <shortName>GMT 2</shortName>
    </recommendedName>
</protein>
<reference key="1">
    <citation type="journal article" date="2005" name="Nature">
        <title>Sequencing of Aspergillus nidulans and comparative analysis with A. fumigatus and A. oryzae.</title>
        <authorList>
            <person name="Galagan J.E."/>
            <person name="Calvo S.E."/>
            <person name="Cuomo C."/>
            <person name="Ma L.-J."/>
            <person name="Wortman J.R."/>
            <person name="Batzoglou S."/>
            <person name="Lee S.-I."/>
            <person name="Bastuerkmen M."/>
            <person name="Spevak C.C."/>
            <person name="Clutterbuck J."/>
            <person name="Kapitonov V."/>
            <person name="Jurka J."/>
            <person name="Scazzocchio C."/>
            <person name="Farman M.L."/>
            <person name="Butler J."/>
            <person name="Purcell S."/>
            <person name="Harris S."/>
            <person name="Braus G.H."/>
            <person name="Draht O."/>
            <person name="Busch S."/>
            <person name="D'Enfert C."/>
            <person name="Bouchier C."/>
            <person name="Goldman G.H."/>
            <person name="Bell-Pedersen D."/>
            <person name="Griffiths-Jones S."/>
            <person name="Doonan J.H."/>
            <person name="Yu J."/>
            <person name="Vienken K."/>
            <person name="Pain A."/>
            <person name="Freitag M."/>
            <person name="Selker E.U."/>
            <person name="Archer D.B."/>
            <person name="Penalva M.A."/>
            <person name="Oakley B.R."/>
            <person name="Momany M."/>
            <person name="Tanaka T."/>
            <person name="Kumagai T."/>
            <person name="Asai K."/>
            <person name="Machida M."/>
            <person name="Nierman W.C."/>
            <person name="Denning D.W."/>
            <person name="Caddick M.X."/>
            <person name="Hynes M."/>
            <person name="Paoletti M."/>
            <person name="Fischer R."/>
            <person name="Miller B.L."/>
            <person name="Dyer P.S."/>
            <person name="Sachs M.S."/>
            <person name="Osmani S.A."/>
            <person name="Birren B.W."/>
        </authorList>
    </citation>
    <scope>NUCLEOTIDE SEQUENCE [LARGE SCALE GENOMIC DNA]</scope>
    <source>
        <strain>FGSC A4 / ATCC 38163 / CBS 112.46 / NRRL 194 / M139</strain>
    </source>
</reference>
<reference key="2">
    <citation type="journal article" date="2009" name="Fungal Genet. Biol.">
        <title>The 2008 update of the Aspergillus nidulans genome annotation: a community effort.</title>
        <authorList>
            <person name="Wortman J.R."/>
            <person name="Gilsenan J.M."/>
            <person name="Joardar V."/>
            <person name="Deegan J."/>
            <person name="Clutterbuck J."/>
            <person name="Andersen M.R."/>
            <person name="Archer D."/>
            <person name="Bencina M."/>
            <person name="Braus G."/>
            <person name="Coutinho P."/>
            <person name="von Dohren H."/>
            <person name="Doonan J."/>
            <person name="Driessen A.J."/>
            <person name="Durek P."/>
            <person name="Espeso E."/>
            <person name="Fekete E."/>
            <person name="Flipphi M."/>
            <person name="Estrada C.G."/>
            <person name="Geysens S."/>
            <person name="Goldman G."/>
            <person name="de Groot P.W."/>
            <person name="Hansen K."/>
            <person name="Harris S.D."/>
            <person name="Heinekamp T."/>
            <person name="Helmstaedt K."/>
            <person name="Henrissat B."/>
            <person name="Hofmann G."/>
            <person name="Homan T."/>
            <person name="Horio T."/>
            <person name="Horiuchi H."/>
            <person name="James S."/>
            <person name="Jones M."/>
            <person name="Karaffa L."/>
            <person name="Karanyi Z."/>
            <person name="Kato M."/>
            <person name="Keller N."/>
            <person name="Kelly D.E."/>
            <person name="Kiel J.A."/>
            <person name="Kim J.M."/>
            <person name="van der Klei I.J."/>
            <person name="Klis F.M."/>
            <person name="Kovalchuk A."/>
            <person name="Krasevec N."/>
            <person name="Kubicek C.P."/>
            <person name="Liu B."/>
            <person name="Maccabe A."/>
            <person name="Meyer V."/>
            <person name="Mirabito P."/>
            <person name="Miskei M."/>
            <person name="Mos M."/>
            <person name="Mullins J."/>
            <person name="Nelson D.R."/>
            <person name="Nielsen J."/>
            <person name="Oakley B.R."/>
            <person name="Osmani S.A."/>
            <person name="Pakula T."/>
            <person name="Paszewski A."/>
            <person name="Paulsen I."/>
            <person name="Pilsyk S."/>
            <person name="Pocsi I."/>
            <person name="Punt P.J."/>
            <person name="Ram A.F."/>
            <person name="Ren Q."/>
            <person name="Robellet X."/>
            <person name="Robson G."/>
            <person name="Seiboth B."/>
            <person name="van Solingen P."/>
            <person name="Specht T."/>
            <person name="Sun J."/>
            <person name="Taheri-Talesh N."/>
            <person name="Takeshita N."/>
            <person name="Ussery D."/>
            <person name="vanKuyk P.A."/>
            <person name="Visser H."/>
            <person name="van de Vondervoort P.J."/>
            <person name="de Vries R.P."/>
            <person name="Walton J."/>
            <person name="Xiang X."/>
            <person name="Xiong Y."/>
            <person name="Zeng A.P."/>
            <person name="Brandt B.W."/>
            <person name="Cornell M.J."/>
            <person name="van den Hondel C.A."/>
            <person name="Visser J."/>
            <person name="Oliver S.G."/>
            <person name="Turner G."/>
        </authorList>
    </citation>
    <scope>GENOME REANNOTATION</scope>
    <source>
        <strain>FGSC A4 / ATCC 38163 / CBS 112.46 / NRRL 194 / M139</strain>
    </source>
</reference>
<proteinExistence type="inferred from homology"/>
<accession>Q5AQY2</accession>
<accession>C8VQQ0</accession>
<gene>
    <name type="primary">gmt2</name>
    <name type="synonym">vrg4-2</name>
    <name type="ORF">AN9298</name>
</gene>
<comment type="function">
    <text evidence="1">Involved in the import of GDP-mannose from the cytoplasm into the Golgi lumen.</text>
</comment>
<comment type="subunit">
    <text evidence="1">Homooligomer.</text>
</comment>
<comment type="subcellular location">
    <subcellularLocation>
        <location evidence="1">Golgi apparatus membrane</location>
        <topology evidence="1">Multi-pass membrane protein</topology>
    </subcellularLocation>
    <subcellularLocation>
        <location evidence="1">Cytoplasmic vesicle membrane</location>
        <topology evidence="1">Multi-pass membrane protein</topology>
    </subcellularLocation>
    <subcellularLocation>
        <location evidence="1">Endoplasmic reticulum membrane</location>
        <topology evidence="1">Multi-pass membrane protein</topology>
    </subcellularLocation>
</comment>
<comment type="similarity">
    <text evidence="3">Belongs to the TPT transporter family. SLC35D subfamily.</text>
</comment>
<comment type="sequence caution" evidence="3">
    <conflict type="erroneous gene model prediction">
        <sequence resource="EMBL-CDS" id="CBF87355"/>
    </conflict>
</comment>
<comment type="sequence caution" evidence="3">
    <conflict type="erroneous gene model prediction">
        <sequence resource="EMBL-CDS" id="EAA66365"/>
    </conflict>
</comment>
<organism>
    <name type="scientific">Emericella nidulans (strain FGSC A4 / ATCC 38163 / CBS 112.46 / NRRL 194 / M139)</name>
    <name type="common">Aspergillus nidulans</name>
    <dbReference type="NCBI Taxonomy" id="227321"/>
    <lineage>
        <taxon>Eukaryota</taxon>
        <taxon>Fungi</taxon>
        <taxon>Dikarya</taxon>
        <taxon>Ascomycota</taxon>
        <taxon>Pezizomycotina</taxon>
        <taxon>Eurotiomycetes</taxon>
        <taxon>Eurotiomycetidae</taxon>
        <taxon>Eurotiales</taxon>
        <taxon>Aspergillaceae</taxon>
        <taxon>Aspergillus</taxon>
        <taxon>Aspergillus subgen. Nidulantes</taxon>
    </lineage>
</organism>
<dbReference type="EMBL" id="AACD01000172">
    <property type="protein sequence ID" value="EAA66365.1"/>
    <property type="status" value="ALT_SEQ"/>
    <property type="molecule type" value="Genomic_DNA"/>
</dbReference>
<dbReference type="EMBL" id="BN001308">
    <property type="protein sequence ID" value="CBF87355.1"/>
    <property type="status" value="ALT_SEQ"/>
    <property type="molecule type" value="Genomic_DNA"/>
</dbReference>
<dbReference type="RefSeq" id="XP_682567.1">
    <property type="nucleotide sequence ID" value="XM_677475.1"/>
</dbReference>
<dbReference type="SMR" id="Q5AQY2"/>
<dbReference type="STRING" id="227321.Q5AQY2"/>
<dbReference type="KEGG" id="ani:ANIA_09298"/>
<dbReference type="eggNOG" id="KOG1444">
    <property type="taxonomic scope" value="Eukaryota"/>
</dbReference>
<dbReference type="HOGENOM" id="CLU_025360_1_1_1"/>
<dbReference type="InParanoid" id="Q5AQY2"/>
<dbReference type="OrthoDB" id="417037at2759"/>
<dbReference type="Proteomes" id="UP000000560">
    <property type="component" value="Chromosome VIII"/>
</dbReference>
<dbReference type="GO" id="GO:0030659">
    <property type="term" value="C:cytoplasmic vesicle membrane"/>
    <property type="evidence" value="ECO:0007669"/>
    <property type="project" value="UniProtKB-SubCell"/>
</dbReference>
<dbReference type="GO" id="GO:0005789">
    <property type="term" value="C:endoplasmic reticulum membrane"/>
    <property type="evidence" value="ECO:0007669"/>
    <property type="project" value="UniProtKB-SubCell"/>
</dbReference>
<dbReference type="GO" id="GO:0005794">
    <property type="term" value="C:Golgi apparatus"/>
    <property type="evidence" value="ECO:0000318"/>
    <property type="project" value="GO_Central"/>
</dbReference>
<dbReference type="GO" id="GO:0000139">
    <property type="term" value="C:Golgi membrane"/>
    <property type="evidence" value="ECO:0007669"/>
    <property type="project" value="UniProtKB-SubCell"/>
</dbReference>
<dbReference type="GO" id="GO:0015297">
    <property type="term" value="F:antiporter activity"/>
    <property type="evidence" value="ECO:0000318"/>
    <property type="project" value="GO_Central"/>
</dbReference>
<dbReference type="GO" id="GO:0005458">
    <property type="term" value="F:GDP-mannose transmembrane transporter activity"/>
    <property type="evidence" value="ECO:0000318"/>
    <property type="project" value="GO_Central"/>
</dbReference>
<dbReference type="GO" id="GO:1990570">
    <property type="term" value="P:GDP-mannose transmembrane transport"/>
    <property type="evidence" value="ECO:0000318"/>
    <property type="project" value="GO_Central"/>
</dbReference>
<dbReference type="InterPro" id="IPR050186">
    <property type="entry name" value="TPT_transporter"/>
</dbReference>
<dbReference type="NCBIfam" id="TIGR00803">
    <property type="entry name" value="nst"/>
    <property type="match status" value="1"/>
</dbReference>
<dbReference type="PANTHER" id="PTHR11132">
    <property type="entry name" value="SOLUTE CARRIER FAMILY 35"/>
    <property type="match status" value="1"/>
</dbReference>
<evidence type="ECO:0000250" key="1"/>
<evidence type="ECO:0000255" key="2"/>
<evidence type="ECO:0000305" key="3"/>
<name>GMT2_EMENI</name>
<feature type="chain" id="PRO_0000333523" description="GDP-mannose transporter 2">
    <location>
        <begin position="1"/>
        <end position="357"/>
    </location>
</feature>
<feature type="topological domain" description="Cytoplasmic" evidence="1">
    <location>
        <begin position="1"/>
        <end position="43"/>
    </location>
</feature>
<feature type="transmembrane region" description="Helical" evidence="2">
    <location>
        <begin position="44"/>
        <end position="64"/>
    </location>
</feature>
<feature type="topological domain" description="Lumenal" evidence="1">
    <location>
        <begin position="65"/>
        <end position="68"/>
    </location>
</feature>
<feature type="transmembrane region" description="Helical" evidence="2">
    <location>
        <begin position="69"/>
        <end position="89"/>
    </location>
</feature>
<feature type="topological domain" description="Cytoplasmic" evidence="1">
    <location>
        <begin position="90"/>
        <end position="107"/>
    </location>
</feature>
<feature type="transmembrane region" description="Helical" evidence="2">
    <location>
        <begin position="108"/>
        <end position="128"/>
    </location>
</feature>
<feature type="topological domain" description="Lumenal" evidence="1">
    <location>
        <position position="129"/>
    </location>
</feature>
<feature type="transmembrane region" description="Helical" evidence="2">
    <location>
        <begin position="130"/>
        <end position="150"/>
    </location>
</feature>
<feature type="topological domain" description="Cytoplasmic" evidence="1">
    <location>
        <begin position="151"/>
        <end position="161"/>
    </location>
</feature>
<feature type="transmembrane region" description="Helical" evidence="2">
    <location>
        <begin position="162"/>
        <end position="182"/>
    </location>
</feature>
<feature type="topological domain" description="Lumenal" evidence="1">
    <location>
        <begin position="183"/>
        <end position="196"/>
    </location>
</feature>
<feature type="transmembrane region" description="Helical" evidence="2">
    <location>
        <begin position="197"/>
        <end position="217"/>
    </location>
</feature>
<feature type="topological domain" description="Cytoplasmic" evidence="1">
    <location>
        <begin position="218"/>
        <end position="238"/>
    </location>
</feature>
<feature type="transmembrane region" description="Helical" evidence="2">
    <location>
        <begin position="239"/>
        <end position="259"/>
    </location>
</feature>
<feature type="topological domain" description="Lumenal" evidence="1">
    <location>
        <begin position="260"/>
        <end position="277"/>
    </location>
</feature>
<feature type="transmembrane region" description="Helical" evidence="2">
    <location>
        <begin position="278"/>
        <end position="298"/>
    </location>
</feature>
<feature type="topological domain" description="Cytoplasmic" evidence="1">
    <location>
        <begin position="299"/>
        <end position="306"/>
    </location>
</feature>
<feature type="transmembrane region" description="Helical" evidence="2">
    <location>
        <begin position="307"/>
        <end position="327"/>
    </location>
</feature>
<feature type="topological domain" description="Lumenal" evidence="1">
    <location>
        <begin position="328"/>
        <end position="332"/>
    </location>
</feature>
<feature type="transmembrane region" description="Helical" evidence="2">
    <location>
        <begin position="333"/>
        <end position="352"/>
    </location>
</feature>
<feature type="topological domain" description="Cytoplasmic" evidence="1">
    <location>
        <begin position="353"/>
        <end position="357"/>
    </location>
</feature>
<sequence length="357" mass="38149">MASTRNGISKDELLPTYELQSQRDVENSGSVTSFASKISNNAAAAVLAYCLSSISMTLVNKYVVSGASWNLSFLYLAIQSFIGTVAIMVCKKAGLIQNLGLFDLKKAQTWLPISLLLVGMIYTGNKALQFLSVPVYTIFKNLTIIVIAYGEVFMVGGSVKPLALLSFGLMVLSSVVAAWADIQIATAATAKASSDSAVATLSALNAGYAWMGTNVVFSASYALGMRRVIKKTNFDNWDVMFYNNLLSVPILLLSSLLVEDWSSENLQRNFPAESRQSLVIGIFYSGVAAIFISYCTAWCVRATSSTTYAMVGALNKLPLAVAGIVFFAAPVTFGSVSAIVLGFISGLVYTWAKSTGA</sequence>